<comment type="similarity">
    <text evidence="1">Belongs to the universal ribosomal protein uL29 family.</text>
</comment>
<protein>
    <recommendedName>
        <fullName evidence="1">Large ribosomal subunit protein uL29</fullName>
    </recommendedName>
    <alternativeName>
        <fullName evidence="2">50S ribosomal protein L29</fullName>
    </alternativeName>
</protein>
<sequence length="65" mass="7458">MKFKDINVKPVAELEQMVNDLKAELFTLRFQNSTGQLDQTHKIKMVRQDIAKVLTALSQKNRGAQ</sequence>
<organism>
    <name type="scientific">Mycoplasmopsis pulmonis (strain UAB CTIP)</name>
    <name type="common">Mycoplasma pulmonis</name>
    <dbReference type="NCBI Taxonomy" id="272635"/>
    <lineage>
        <taxon>Bacteria</taxon>
        <taxon>Bacillati</taxon>
        <taxon>Mycoplasmatota</taxon>
        <taxon>Mycoplasmoidales</taxon>
        <taxon>Metamycoplasmataceae</taxon>
        <taxon>Mycoplasmopsis</taxon>
    </lineage>
</organism>
<accession>Q98PZ0</accession>
<name>RL29_MYCPU</name>
<keyword id="KW-1185">Reference proteome</keyword>
<keyword id="KW-0687">Ribonucleoprotein</keyword>
<keyword id="KW-0689">Ribosomal protein</keyword>
<gene>
    <name evidence="1" type="primary">rpmC</name>
    <name type="ordered locus">MYPU_5790</name>
</gene>
<dbReference type="EMBL" id="AL445565">
    <property type="protein sequence ID" value="CAC13752.1"/>
    <property type="molecule type" value="Genomic_DNA"/>
</dbReference>
<dbReference type="PIR" id="C90584">
    <property type="entry name" value="C90584"/>
</dbReference>
<dbReference type="RefSeq" id="WP_010925380.1">
    <property type="nucleotide sequence ID" value="NC_002771.1"/>
</dbReference>
<dbReference type="SMR" id="Q98PZ0"/>
<dbReference type="STRING" id="272635.gene:17577186"/>
<dbReference type="KEGG" id="mpu:MYPU_5790"/>
<dbReference type="eggNOG" id="COG0255">
    <property type="taxonomic scope" value="Bacteria"/>
</dbReference>
<dbReference type="HOGENOM" id="CLU_158491_7_0_14"/>
<dbReference type="BioCyc" id="MPUL272635:G1GT6-592-MONOMER"/>
<dbReference type="Proteomes" id="UP000000528">
    <property type="component" value="Chromosome"/>
</dbReference>
<dbReference type="GO" id="GO:0022625">
    <property type="term" value="C:cytosolic large ribosomal subunit"/>
    <property type="evidence" value="ECO:0007669"/>
    <property type="project" value="TreeGrafter"/>
</dbReference>
<dbReference type="GO" id="GO:0003735">
    <property type="term" value="F:structural constituent of ribosome"/>
    <property type="evidence" value="ECO:0007669"/>
    <property type="project" value="InterPro"/>
</dbReference>
<dbReference type="GO" id="GO:0006412">
    <property type="term" value="P:translation"/>
    <property type="evidence" value="ECO:0007669"/>
    <property type="project" value="UniProtKB-UniRule"/>
</dbReference>
<dbReference type="CDD" id="cd00427">
    <property type="entry name" value="Ribosomal_L29_HIP"/>
    <property type="match status" value="1"/>
</dbReference>
<dbReference type="FunFam" id="1.10.287.310:FF:000001">
    <property type="entry name" value="50S ribosomal protein L29"/>
    <property type="match status" value="1"/>
</dbReference>
<dbReference type="Gene3D" id="1.10.287.310">
    <property type="match status" value="1"/>
</dbReference>
<dbReference type="HAMAP" id="MF_00374">
    <property type="entry name" value="Ribosomal_uL29"/>
    <property type="match status" value="1"/>
</dbReference>
<dbReference type="InterPro" id="IPR050063">
    <property type="entry name" value="Ribosomal_protein_uL29"/>
</dbReference>
<dbReference type="InterPro" id="IPR001854">
    <property type="entry name" value="Ribosomal_uL29"/>
</dbReference>
<dbReference type="InterPro" id="IPR018254">
    <property type="entry name" value="Ribosomal_uL29_CS"/>
</dbReference>
<dbReference type="InterPro" id="IPR036049">
    <property type="entry name" value="Ribosomal_uL29_sf"/>
</dbReference>
<dbReference type="NCBIfam" id="TIGR00012">
    <property type="entry name" value="L29"/>
    <property type="match status" value="1"/>
</dbReference>
<dbReference type="PANTHER" id="PTHR10916">
    <property type="entry name" value="60S RIBOSOMAL PROTEIN L35/50S RIBOSOMAL PROTEIN L29"/>
    <property type="match status" value="1"/>
</dbReference>
<dbReference type="PANTHER" id="PTHR10916:SF0">
    <property type="entry name" value="LARGE RIBOSOMAL SUBUNIT PROTEIN UL29C"/>
    <property type="match status" value="1"/>
</dbReference>
<dbReference type="Pfam" id="PF00831">
    <property type="entry name" value="Ribosomal_L29"/>
    <property type="match status" value="1"/>
</dbReference>
<dbReference type="SUPFAM" id="SSF46561">
    <property type="entry name" value="Ribosomal protein L29 (L29p)"/>
    <property type="match status" value="1"/>
</dbReference>
<dbReference type="PROSITE" id="PS00579">
    <property type="entry name" value="RIBOSOMAL_L29"/>
    <property type="match status" value="1"/>
</dbReference>
<reference key="1">
    <citation type="journal article" date="2001" name="Nucleic Acids Res.">
        <title>The complete genome sequence of the murine respiratory pathogen Mycoplasma pulmonis.</title>
        <authorList>
            <person name="Chambaud I."/>
            <person name="Heilig R."/>
            <person name="Ferris S."/>
            <person name="Barbe V."/>
            <person name="Samson D."/>
            <person name="Galisson F."/>
            <person name="Moszer I."/>
            <person name="Dybvig K."/>
            <person name="Wroblewski H."/>
            <person name="Viari A."/>
            <person name="Rocha E.P.C."/>
            <person name="Blanchard A."/>
        </authorList>
    </citation>
    <scope>NUCLEOTIDE SEQUENCE [LARGE SCALE GENOMIC DNA]</scope>
    <source>
        <strain>UAB CTIP</strain>
    </source>
</reference>
<feature type="chain" id="PRO_0000130423" description="Large ribosomal subunit protein uL29">
    <location>
        <begin position="1"/>
        <end position="65"/>
    </location>
</feature>
<proteinExistence type="inferred from homology"/>
<evidence type="ECO:0000255" key="1">
    <source>
        <dbReference type="HAMAP-Rule" id="MF_00374"/>
    </source>
</evidence>
<evidence type="ECO:0000305" key="2"/>